<keyword id="KW-0010">Activator</keyword>
<keyword id="KW-0539">Nucleus</keyword>
<keyword id="KW-1185">Reference proteome</keyword>
<keyword id="KW-0804">Transcription</keyword>
<keyword id="KW-0805">Transcription regulation</keyword>
<accession>Q9V439</accession>
<feature type="chain" id="PRO_0000308574" description="Mediator of RNA polymerase II transcription subunit 22">
    <location>
        <begin position="1"/>
        <end position="143"/>
    </location>
</feature>
<dbReference type="EMBL" id="AE014298">
    <property type="protein sequence ID" value="AAF45564.1"/>
    <property type="molecule type" value="Genomic_DNA"/>
</dbReference>
<dbReference type="EMBL" id="AL109630">
    <property type="protein sequence ID" value="CAB65873.1"/>
    <property type="molecule type" value="Genomic_DNA"/>
</dbReference>
<dbReference type="EMBL" id="AY071113">
    <property type="protein sequence ID" value="AAL48735.1"/>
    <property type="molecule type" value="mRNA"/>
</dbReference>
<dbReference type="RefSeq" id="NP_569870.1">
    <property type="nucleotide sequence ID" value="NM_130514.5"/>
</dbReference>
<dbReference type="SMR" id="Q9V439"/>
<dbReference type="BioGRID" id="57606">
    <property type="interactions" value="10"/>
</dbReference>
<dbReference type="ComplexPortal" id="CPX-2308">
    <property type="entry name" value="Core mediator complex"/>
</dbReference>
<dbReference type="DIP" id="DIP-23196N"/>
<dbReference type="FunCoup" id="Q9V439">
    <property type="interactions" value="1667"/>
</dbReference>
<dbReference type="IntAct" id="Q9V439">
    <property type="interactions" value="18"/>
</dbReference>
<dbReference type="STRING" id="7227.FBpp0070160"/>
<dbReference type="PaxDb" id="7227-FBpp0070160"/>
<dbReference type="DNASU" id="31038"/>
<dbReference type="EnsemblMetazoa" id="FBtr0070165">
    <property type="protein sequence ID" value="FBpp0070160"/>
    <property type="gene ID" value="FBgn0040339"/>
</dbReference>
<dbReference type="GeneID" id="31038"/>
<dbReference type="KEGG" id="dme:Dmel_CG3034"/>
<dbReference type="AGR" id="FB:FBgn0040339"/>
<dbReference type="CTD" id="6837"/>
<dbReference type="FlyBase" id="FBgn0040339">
    <property type="gene designation" value="MED22"/>
</dbReference>
<dbReference type="VEuPathDB" id="VectorBase:FBgn0040339"/>
<dbReference type="eggNOG" id="KOG3304">
    <property type="taxonomic scope" value="Eukaryota"/>
</dbReference>
<dbReference type="GeneTree" id="ENSGT00390000004339"/>
<dbReference type="HOGENOM" id="CLU_117242_2_0_1"/>
<dbReference type="InParanoid" id="Q9V439"/>
<dbReference type="OMA" id="KQAECDQ"/>
<dbReference type="OrthoDB" id="203279at2759"/>
<dbReference type="PhylomeDB" id="Q9V439"/>
<dbReference type="SignaLink" id="Q9V439"/>
<dbReference type="BioGRID-ORCS" id="31038">
    <property type="hits" value="0 hits in 1 CRISPR screen"/>
</dbReference>
<dbReference type="GenomeRNAi" id="31038"/>
<dbReference type="PRO" id="PR:Q9V439"/>
<dbReference type="Proteomes" id="UP000000803">
    <property type="component" value="Chromosome X"/>
</dbReference>
<dbReference type="Bgee" id="FBgn0040339">
    <property type="expression patterns" value="Expressed in ovary and 122 other cell types or tissues"/>
</dbReference>
<dbReference type="GO" id="GO:0000785">
    <property type="term" value="C:chromatin"/>
    <property type="evidence" value="ECO:0000314"/>
    <property type="project" value="FlyBase"/>
</dbReference>
<dbReference type="GO" id="GO:0016592">
    <property type="term" value="C:mediator complex"/>
    <property type="evidence" value="ECO:0000314"/>
    <property type="project" value="FlyBase"/>
</dbReference>
<dbReference type="GO" id="GO:0005730">
    <property type="term" value="C:nucleolus"/>
    <property type="evidence" value="ECO:0000314"/>
    <property type="project" value="FlyBase"/>
</dbReference>
<dbReference type="GO" id="GO:0005634">
    <property type="term" value="C:nucleus"/>
    <property type="evidence" value="ECO:0000314"/>
    <property type="project" value="FlyBase"/>
</dbReference>
<dbReference type="GO" id="GO:0003712">
    <property type="term" value="F:transcription coregulator activity"/>
    <property type="evidence" value="ECO:0007669"/>
    <property type="project" value="InterPro"/>
</dbReference>
<dbReference type="GO" id="GO:0000278">
    <property type="term" value="P:mitotic cell cycle"/>
    <property type="evidence" value="ECO:0007001"/>
    <property type="project" value="FlyBase"/>
</dbReference>
<dbReference type="GO" id="GO:0006357">
    <property type="term" value="P:regulation of transcription by RNA polymerase II"/>
    <property type="evidence" value="ECO:0000315"/>
    <property type="project" value="FlyBase"/>
</dbReference>
<dbReference type="InterPro" id="IPR009332">
    <property type="entry name" value="Med22"/>
</dbReference>
<dbReference type="PANTHER" id="PTHR12434">
    <property type="entry name" value="MEDIATOR OF RNA POLYMERASE II TRANSCRIPTION SUBUNIT 22"/>
    <property type="match status" value="1"/>
</dbReference>
<dbReference type="PANTHER" id="PTHR12434:SF6">
    <property type="entry name" value="MEDIATOR OF RNA POLYMERASE II TRANSCRIPTION SUBUNIT 22"/>
    <property type="match status" value="1"/>
</dbReference>
<dbReference type="Pfam" id="PF06179">
    <property type="entry name" value="Med22"/>
    <property type="match status" value="1"/>
</dbReference>
<evidence type="ECO:0000269" key="1">
    <source>
    </source>
</evidence>
<evidence type="ECO:0000305" key="2"/>
<gene>
    <name type="primary">MED22</name>
    <name type="synonym">Med24</name>
    <name type="ORF">CG3034</name>
</gene>
<proteinExistence type="evidence at protein level"/>
<name>MED22_DROME</name>
<sequence length="143" mass="16594">MASGSRTTILPQSKEALLKSYNARLKDDVRSMLENFEEILKLARRESHSQISKTTQCEQDALEMQVRAANMVRAGESLMKLVADLKQYLILNDFHSVNEAITNNSQLFRNTQSECDKKLMKLRDEMAMDLYDLEEEYYTSIFK</sequence>
<reference key="1">
    <citation type="journal article" date="2000" name="Science">
        <title>The genome sequence of Drosophila melanogaster.</title>
        <authorList>
            <person name="Adams M.D."/>
            <person name="Celniker S.E."/>
            <person name="Holt R.A."/>
            <person name="Evans C.A."/>
            <person name="Gocayne J.D."/>
            <person name="Amanatides P.G."/>
            <person name="Scherer S.E."/>
            <person name="Li P.W."/>
            <person name="Hoskins R.A."/>
            <person name="Galle R.F."/>
            <person name="George R.A."/>
            <person name="Lewis S.E."/>
            <person name="Richards S."/>
            <person name="Ashburner M."/>
            <person name="Henderson S.N."/>
            <person name="Sutton G.G."/>
            <person name="Wortman J.R."/>
            <person name="Yandell M.D."/>
            <person name="Zhang Q."/>
            <person name="Chen L.X."/>
            <person name="Brandon R.C."/>
            <person name="Rogers Y.-H.C."/>
            <person name="Blazej R.G."/>
            <person name="Champe M."/>
            <person name="Pfeiffer B.D."/>
            <person name="Wan K.H."/>
            <person name="Doyle C."/>
            <person name="Baxter E.G."/>
            <person name="Helt G."/>
            <person name="Nelson C.R."/>
            <person name="Miklos G.L.G."/>
            <person name="Abril J.F."/>
            <person name="Agbayani A."/>
            <person name="An H.-J."/>
            <person name="Andrews-Pfannkoch C."/>
            <person name="Baldwin D."/>
            <person name="Ballew R.M."/>
            <person name="Basu A."/>
            <person name="Baxendale J."/>
            <person name="Bayraktaroglu L."/>
            <person name="Beasley E.M."/>
            <person name="Beeson K.Y."/>
            <person name="Benos P.V."/>
            <person name="Berman B.P."/>
            <person name="Bhandari D."/>
            <person name="Bolshakov S."/>
            <person name="Borkova D."/>
            <person name="Botchan M.R."/>
            <person name="Bouck J."/>
            <person name="Brokstein P."/>
            <person name="Brottier P."/>
            <person name="Burtis K.C."/>
            <person name="Busam D.A."/>
            <person name="Butler H."/>
            <person name="Cadieu E."/>
            <person name="Center A."/>
            <person name="Chandra I."/>
            <person name="Cherry J.M."/>
            <person name="Cawley S."/>
            <person name="Dahlke C."/>
            <person name="Davenport L.B."/>
            <person name="Davies P."/>
            <person name="de Pablos B."/>
            <person name="Delcher A."/>
            <person name="Deng Z."/>
            <person name="Mays A.D."/>
            <person name="Dew I."/>
            <person name="Dietz S.M."/>
            <person name="Dodson K."/>
            <person name="Doup L.E."/>
            <person name="Downes M."/>
            <person name="Dugan-Rocha S."/>
            <person name="Dunkov B.C."/>
            <person name="Dunn P."/>
            <person name="Durbin K.J."/>
            <person name="Evangelista C.C."/>
            <person name="Ferraz C."/>
            <person name="Ferriera S."/>
            <person name="Fleischmann W."/>
            <person name="Fosler C."/>
            <person name="Gabrielian A.E."/>
            <person name="Garg N.S."/>
            <person name="Gelbart W.M."/>
            <person name="Glasser K."/>
            <person name="Glodek A."/>
            <person name="Gong F."/>
            <person name="Gorrell J.H."/>
            <person name="Gu Z."/>
            <person name="Guan P."/>
            <person name="Harris M."/>
            <person name="Harris N.L."/>
            <person name="Harvey D.A."/>
            <person name="Heiman T.J."/>
            <person name="Hernandez J.R."/>
            <person name="Houck J."/>
            <person name="Hostin D."/>
            <person name="Houston K.A."/>
            <person name="Howland T.J."/>
            <person name="Wei M.-H."/>
            <person name="Ibegwam C."/>
            <person name="Jalali M."/>
            <person name="Kalush F."/>
            <person name="Karpen G.H."/>
            <person name="Ke Z."/>
            <person name="Kennison J.A."/>
            <person name="Ketchum K.A."/>
            <person name="Kimmel B.E."/>
            <person name="Kodira C.D."/>
            <person name="Kraft C.L."/>
            <person name="Kravitz S."/>
            <person name="Kulp D."/>
            <person name="Lai Z."/>
            <person name="Lasko P."/>
            <person name="Lei Y."/>
            <person name="Levitsky A.A."/>
            <person name="Li J.H."/>
            <person name="Li Z."/>
            <person name="Liang Y."/>
            <person name="Lin X."/>
            <person name="Liu X."/>
            <person name="Mattei B."/>
            <person name="McIntosh T.C."/>
            <person name="McLeod M.P."/>
            <person name="McPherson D."/>
            <person name="Merkulov G."/>
            <person name="Milshina N.V."/>
            <person name="Mobarry C."/>
            <person name="Morris J."/>
            <person name="Moshrefi A."/>
            <person name="Mount S.M."/>
            <person name="Moy M."/>
            <person name="Murphy B."/>
            <person name="Murphy L."/>
            <person name="Muzny D.M."/>
            <person name="Nelson D.L."/>
            <person name="Nelson D.R."/>
            <person name="Nelson K.A."/>
            <person name="Nixon K."/>
            <person name="Nusskern D.R."/>
            <person name="Pacleb J.M."/>
            <person name="Palazzolo M."/>
            <person name="Pittman G.S."/>
            <person name="Pan S."/>
            <person name="Pollard J."/>
            <person name="Puri V."/>
            <person name="Reese M.G."/>
            <person name="Reinert K."/>
            <person name="Remington K."/>
            <person name="Saunders R.D.C."/>
            <person name="Scheeler F."/>
            <person name="Shen H."/>
            <person name="Shue B.C."/>
            <person name="Siden-Kiamos I."/>
            <person name="Simpson M."/>
            <person name="Skupski M.P."/>
            <person name="Smith T.J."/>
            <person name="Spier E."/>
            <person name="Spradling A.C."/>
            <person name="Stapleton M."/>
            <person name="Strong R."/>
            <person name="Sun E."/>
            <person name="Svirskas R."/>
            <person name="Tector C."/>
            <person name="Turner R."/>
            <person name="Venter E."/>
            <person name="Wang A.H."/>
            <person name="Wang X."/>
            <person name="Wang Z.-Y."/>
            <person name="Wassarman D.A."/>
            <person name="Weinstock G.M."/>
            <person name="Weissenbach J."/>
            <person name="Williams S.M."/>
            <person name="Woodage T."/>
            <person name="Worley K.C."/>
            <person name="Wu D."/>
            <person name="Yang S."/>
            <person name="Yao Q.A."/>
            <person name="Ye J."/>
            <person name="Yeh R.-F."/>
            <person name="Zaveri J.S."/>
            <person name="Zhan M."/>
            <person name="Zhang G."/>
            <person name="Zhao Q."/>
            <person name="Zheng L."/>
            <person name="Zheng X.H."/>
            <person name="Zhong F.N."/>
            <person name="Zhong W."/>
            <person name="Zhou X."/>
            <person name="Zhu S.C."/>
            <person name="Zhu X."/>
            <person name="Smith H.O."/>
            <person name="Gibbs R.A."/>
            <person name="Myers E.W."/>
            <person name="Rubin G.M."/>
            <person name="Venter J.C."/>
        </authorList>
    </citation>
    <scope>NUCLEOTIDE SEQUENCE [LARGE SCALE GENOMIC DNA]</scope>
    <source>
        <strain>Berkeley</strain>
    </source>
</reference>
<reference key="2">
    <citation type="journal article" date="2002" name="Genome Biol.">
        <title>Annotation of the Drosophila melanogaster euchromatic genome: a systematic review.</title>
        <authorList>
            <person name="Misra S."/>
            <person name="Crosby M.A."/>
            <person name="Mungall C.J."/>
            <person name="Matthews B.B."/>
            <person name="Campbell K.S."/>
            <person name="Hradecky P."/>
            <person name="Huang Y."/>
            <person name="Kaminker J.S."/>
            <person name="Millburn G.H."/>
            <person name="Prochnik S.E."/>
            <person name="Smith C.D."/>
            <person name="Tupy J.L."/>
            <person name="Whitfield E.J."/>
            <person name="Bayraktaroglu L."/>
            <person name="Berman B.P."/>
            <person name="Bettencourt B.R."/>
            <person name="Celniker S.E."/>
            <person name="de Grey A.D.N.J."/>
            <person name="Drysdale R.A."/>
            <person name="Harris N.L."/>
            <person name="Richter J."/>
            <person name="Russo S."/>
            <person name="Schroeder A.J."/>
            <person name="Shu S.Q."/>
            <person name="Stapleton M."/>
            <person name="Yamada C."/>
            <person name="Ashburner M."/>
            <person name="Gelbart W.M."/>
            <person name="Rubin G.M."/>
            <person name="Lewis S.E."/>
        </authorList>
    </citation>
    <scope>GENOME REANNOTATION</scope>
    <source>
        <strain>Berkeley</strain>
    </source>
</reference>
<reference key="3">
    <citation type="journal article" date="2000" name="Science">
        <title>From sequence to chromosome: the tip of the X chromosome of D. melanogaster.</title>
        <authorList>
            <person name="Benos P.V."/>
            <person name="Gatt M.K."/>
            <person name="Ashburner M."/>
            <person name="Murphy L."/>
            <person name="Harris D."/>
            <person name="Barrell B.G."/>
            <person name="Ferraz C."/>
            <person name="Vidal S."/>
            <person name="Brun C."/>
            <person name="Demailles J."/>
            <person name="Cadieu E."/>
            <person name="Dreano S."/>
            <person name="Gloux S."/>
            <person name="Lelaure V."/>
            <person name="Mottier S."/>
            <person name="Galibert F."/>
            <person name="Borkova D."/>
            <person name="Minana B."/>
            <person name="Kafatos F.C."/>
            <person name="Louis C."/>
            <person name="Siden-Kiamos I."/>
            <person name="Bolshakov S."/>
            <person name="Papagiannakis G."/>
            <person name="Spanos L."/>
            <person name="Cox S."/>
            <person name="Madueno E."/>
            <person name="de Pablos B."/>
            <person name="Modolell J."/>
            <person name="Peter A."/>
            <person name="Schoettler P."/>
            <person name="Werner M."/>
            <person name="Mourkioti F."/>
            <person name="Beinert N."/>
            <person name="Dowe G."/>
            <person name="Schaefer U."/>
            <person name="Jaeckle H."/>
            <person name="Bucheton A."/>
            <person name="Callister D.M."/>
            <person name="Campbell L.A."/>
            <person name="Darlamitsou A."/>
            <person name="Henderson N.S."/>
            <person name="McMillan P.J."/>
            <person name="Salles C."/>
            <person name="Tait E.A."/>
            <person name="Valenti P."/>
            <person name="Saunders R.D.C."/>
            <person name="Glover D.M."/>
        </authorList>
    </citation>
    <scope>NUCLEOTIDE SEQUENCE [LARGE SCALE GENOMIC DNA]</scope>
    <source>
        <strain>Oregon-R</strain>
    </source>
</reference>
<reference key="4">
    <citation type="journal article" date="2002" name="Genome Biol.">
        <title>A Drosophila full-length cDNA resource.</title>
        <authorList>
            <person name="Stapleton M."/>
            <person name="Carlson J.W."/>
            <person name="Brokstein P."/>
            <person name="Yu C."/>
            <person name="Champe M."/>
            <person name="George R.A."/>
            <person name="Guarin H."/>
            <person name="Kronmiller B."/>
            <person name="Pacleb J.M."/>
            <person name="Park S."/>
            <person name="Wan K.H."/>
            <person name="Rubin G.M."/>
            <person name="Celniker S.E."/>
        </authorList>
    </citation>
    <scope>NUCLEOTIDE SEQUENCE [LARGE SCALE MRNA]</scope>
    <source>
        <strain>Berkeley</strain>
        <tissue>Embryo</tissue>
    </source>
</reference>
<reference key="5">
    <citation type="journal article" date="2002" name="J. Biol. Chem.">
        <title>Novel Mediator proteins of the small Mediator complex in Drosophila SL2 cells.</title>
        <authorList>
            <person name="Gu J.-Y."/>
            <person name="Park J.M."/>
            <person name="Song E.J."/>
            <person name="Mizuguchi G."/>
            <person name="Yoon J.H."/>
            <person name="Kim-Ha J."/>
            <person name="Lee K.-J."/>
            <person name="Kim Y.-J."/>
        </authorList>
    </citation>
    <scope>IDENTIFICATION BY MASS SPECTROMETRY</scope>
    <scope>IDENTIFICATION IN THE MEDIATOR COMPLEX</scope>
    <scope>FUNCTION OF THE MEDIATOR COMPLEX</scope>
    <scope>INTERACTION WITH MED6 AND MED17</scope>
</reference>
<comment type="function">
    <text evidence="1">Component of the Mediator complex, a coactivator involved in the regulated transcription of nearly all RNA polymerase II-dependent genes. Mediator functions as a bridge to convey information from gene-specific regulatory proteins to the basal RNA polymerase II transcription machinery. Mediator is recruited to promoters by direct interactions with regulatory proteins and serves as a scaffold for the assembly of a functional preinitiation complex with RNA polymerase II and the general transcription factors.</text>
</comment>
<comment type="subunit">
    <text evidence="1">Component of the Mediator complex, which includes at least CDK8, MED4, MED6, MED11, MED14, MED17, MED18, MED20, MED21, MED22, MED27, MED28, MED30 and MED31.</text>
</comment>
<comment type="subcellular location">
    <subcellularLocation>
        <location evidence="2">Nucleus</location>
    </subcellularLocation>
</comment>
<comment type="similarity">
    <text evidence="2">Belongs to the Mediator complex subunit 22 family.</text>
</comment>
<protein>
    <recommendedName>
        <fullName>Mediator of RNA polymerase II transcription subunit 22</fullName>
    </recommendedName>
    <alternativeName>
        <fullName>Mediator complex subunit 22</fullName>
    </alternativeName>
    <alternativeName>
        <fullName>dMED24</fullName>
    </alternativeName>
</protein>
<organism>
    <name type="scientific">Drosophila melanogaster</name>
    <name type="common">Fruit fly</name>
    <dbReference type="NCBI Taxonomy" id="7227"/>
    <lineage>
        <taxon>Eukaryota</taxon>
        <taxon>Metazoa</taxon>
        <taxon>Ecdysozoa</taxon>
        <taxon>Arthropoda</taxon>
        <taxon>Hexapoda</taxon>
        <taxon>Insecta</taxon>
        <taxon>Pterygota</taxon>
        <taxon>Neoptera</taxon>
        <taxon>Endopterygota</taxon>
        <taxon>Diptera</taxon>
        <taxon>Brachycera</taxon>
        <taxon>Muscomorpha</taxon>
        <taxon>Ephydroidea</taxon>
        <taxon>Drosophilidae</taxon>
        <taxon>Drosophila</taxon>
        <taxon>Sophophora</taxon>
    </lineage>
</organism>